<organism>
    <name type="scientific">Macaca fascicularis</name>
    <name type="common">Crab-eating macaque</name>
    <name type="synonym">Cynomolgus monkey</name>
    <dbReference type="NCBI Taxonomy" id="9541"/>
    <lineage>
        <taxon>Eukaryota</taxon>
        <taxon>Metazoa</taxon>
        <taxon>Chordata</taxon>
        <taxon>Craniata</taxon>
        <taxon>Vertebrata</taxon>
        <taxon>Euteleostomi</taxon>
        <taxon>Mammalia</taxon>
        <taxon>Eutheria</taxon>
        <taxon>Euarchontoglires</taxon>
        <taxon>Primates</taxon>
        <taxon>Haplorrhini</taxon>
        <taxon>Catarrhini</taxon>
        <taxon>Cercopithecidae</taxon>
        <taxon>Cercopithecinae</taxon>
        <taxon>Macaca</taxon>
    </lineage>
</organism>
<name>PTGES_MACFA</name>
<sequence>MPAHSLAMSSPALPAFLLCSTLLVIKMYVVAIITGQVRLRKKAFANPEDALRHGGPQYCRSDPDVERCLRAHRNDMETIYPFLFLGFVYSFLGPNPFVAWMHFLVFLLGRVVHTVAYLGKLRAPIRSVTYTLAQLPCASMALQILWEAARHL</sequence>
<dbReference type="EC" id="5.3.99.3" evidence="1"/>
<dbReference type="EC" id="1.11.1.-" evidence="1"/>
<dbReference type="EC" id="2.5.1.18" evidence="1"/>
<dbReference type="EMBL" id="AY573809">
    <property type="protein sequence ID" value="AAS89037.1"/>
    <property type="molecule type" value="mRNA"/>
</dbReference>
<dbReference type="RefSeq" id="XP_015291833.1">
    <property type="nucleotide sequence ID" value="XM_015436347.3"/>
</dbReference>
<dbReference type="SMR" id="Q6PWL6"/>
<dbReference type="STRING" id="9541.ENSMFAP00000037864"/>
<dbReference type="ChEMBL" id="CHEMBL4295610"/>
<dbReference type="GeneID" id="102125534"/>
<dbReference type="KEGG" id="mcf:102125534"/>
<dbReference type="CTD" id="9536"/>
<dbReference type="VEuPathDB" id="HostDB:ENSMFAG00000038160"/>
<dbReference type="eggNOG" id="ENOG502RZBK">
    <property type="taxonomic scope" value="Eukaryota"/>
</dbReference>
<dbReference type="OMA" id="TIAQIPC"/>
<dbReference type="OrthoDB" id="5031at314294"/>
<dbReference type="UniPathway" id="UPA00662"/>
<dbReference type="Proteomes" id="UP000233100">
    <property type="component" value="Chromosome 15"/>
</dbReference>
<dbReference type="GO" id="GO:0016020">
    <property type="term" value="C:membrane"/>
    <property type="evidence" value="ECO:0000250"/>
    <property type="project" value="UniProtKB"/>
</dbReference>
<dbReference type="GO" id="GO:0048471">
    <property type="term" value="C:perinuclear region of cytoplasm"/>
    <property type="evidence" value="ECO:0007669"/>
    <property type="project" value="UniProtKB-SubCell"/>
</dbReference>
<dbReference type="GO" id="GO:0043295">
    <property type="term" value="F:glutathione binding"/>
    <property type="evidence" value="ECO:0000250"/>
    <property type="project" value="UniProtKB"/>
</dbReference>
<dbReference type="GO" id="GO:0004602">
    <property type="term" value="F:glutathione peroxidase activity"/>
    <property type="evidence" value="ECO:0000250"/>
    <property type="project" value="UniProtKB"/>
</dbReference>
<dbReference type="GO" id="GO:0004364">
    <property type="term" value="F:glutathione transferase activity"/>
    <property type="evidence" value="ECO:0000250"/>
    <property type="project" value="UniProtKB"/>
</dbReference>
<dbReference type="GO" id="GO:0050220">
    <property type="term" value="F:prostaglandin-E synthase activity"/>
    <property type="evidence" value="ECO:0000250"/>
    <property type="project" value="UniProtKB"/>
</dbReference>
<dbReference type="GO" id="GO:0001516">
    <property type="term" value="P:prostaglandin biosynthetic process"/>
    <property type="evidence" value="ECO:0000250"/>
    <property type="project" value="UniProtKB"/>
</dbReference>
<dbReference type="GO" id="GO:0050727">
    <property type="term" value="P:regulation of inflammatory response"/>
    <property type="evidence" value="ECO:0000250"/>
    <property type="project" value="UniProtKB"/>
</dbReference>
<dbReference type="FunFam" id="1.20.120.550:FF:000002">
    <property type="entry name" value="Microsomal glutathione S-transferase 1"/>
    <property type="match status" value="1"/>
</dbReference>
<dbReference type="Gene3D" id="1.20.120.550">
    <property type="entry name" value="Membrane associated eicosanoid/glutathione metabolism-like domain"/>
    <property type="match status" value="1"/>
</dbReference>
<dbReference type="InterPro" id="IPR023352">
    <property type="entry name" value="MAPEG-like_dom_sf"/>
</dbReference>
<dbReference type="InterPro" id="IPR001129">
    <property type="entry name" value="Membr-assoc_MAPEG"/>
</dbReference>
<dbReference type="InterPro" id="IPR040162">
    <property type="entry name" value="MGST1-like"/>
</dbReference>
<dbReference type="PANTHER" id="PTHR10689">
    <property type="entry name" value="MICROSOMAL GLUTATHIONE S-TRANSFERASE 1"/>
    <property type="match status" value="1"/>
</dbReference>
<dbReference type="PANTHER" id="PTHR10689:SF9">
    <property type="entry name" value="PROSTAGLANDIN E SYNTHASE"/>
    <property type="match status" value="1"/>
</dbReference>
<dbReference type="Pfam" id="PF01124">
    <property type="entry name" value="MAPEG"/>
    <property type="match status" value="1"/>
</dbReference>
<dbReference type="SUPFAM" id="SSF161084">
    <property type="entry name" value="MAPEG domain-like"/>
    <property type="match status" value="1"/>
</dbReference>
<proteinExistence type="evidence at transcript level"/>
<evidence type="ECO:0000250" key="1">
    <source>
        <dbReference type="UniProtKB" id="O14684"/>
    </source>
</evidence>
<evidence type="ECO:0000250" key="2">
    <source>
        <dbReference type="UniProtKB" id="Q9JM51"/>
    </source>
</evidence>
<evidence type="ECO:0000305" key="3"/>
<feature type="chain" id="PRO_0000217746" description="Prostaglandin E synthase">
    <location>
        <begin position="1"/>
        <end position="152"/>
    </location>
</feature>
<feature type="topological domain" description="Lumenal" evidence="1">
    <location>
        <begin position="1"/>
        <end position="12"/>
    </location>
</feature>
<feature type="transmembrane region" description="Helical" evidence="1">
    <location>
        <begin position="13"/>
        <end position="41"/>
    </location>
</feature>
<feature type="topological domain" description="Cytoplasmic" evidence="1">
    <location>
        <begin position="42"/>
        <end position="60"/>
    </location>
</feature>
<feature type="transmembrane region" description="Helical" evidence="1">
    <location>
        <begin position="61"/>
        <end position="90"/>
    </location>
</feature>
<feature type="topological domain" description="Lumenal" evidence="1">
    <location>
        <begin position="91"/>
        <end position="95"/>
    </location>
</feature>
<feature type="transmembrane region" description="Helical" evidence="1">
    <location>
        <begin position="96"/>
        <end position="119"/>
    </location>
</feature>
<feature type="topological domain" description="Cytoplasmic" evidence="1">
    <location>
        <begin position="120"/>
        <end position="123"/>
    </location>
</feature>
<feature type="transmembrane region" description="Helical" evidence="1">
    <location>
        <begin position="124"/>
        <end position="152"/>
    </location>
</feature>
<feature type="binding site" evidence="1">
    <location>
        <position position="38"/>
    </location>
    <ligand>
        <name>glutathione</name>
        <dbReference type="ChEBI" id="CHEBI:57925"/>
    </ligand>
</feature>
<feature type="binding site" evidence="1">
    <location>
        <begin position="73"/>
        <end position="77"/>
    </location>
    <ligand>
        <name>glutathione</name>
        <dbReference type="ChEBI" id="CHEBI:57925"/>
    </ligand>
</feature>
<feature type="binding site" evidence="1">
    <location>
        <position position="113"/>
    </location>
    <ligand>
        <name>glutathione</name>
        <dbReference type="ChEBI" id="CHEBI:57925"/>
    </ligand>
</feature>
<feature type="binding site" evidence="1">
    <location>
        <position position="117"/>
    </location>
    <ligand>
        <name>glutathione</name>
        <dbReference type="ChEBI" id="CHEBI:57925"/>
    </ligand>
</feature>
<feature type="binding site" evidence="1">
    <location>
        <begin position="126"/>
        <end position="130"/>
    </location>
    <ligand>
        <name>glutathione</name>
        <dbReference type="ChEBI" id="CHEBI:57925"/>
    </ligand>
</feature>
<feature type="site" description="Essential for protaglandin-E synthase activity" evidence="1">
    <location>
        <position position="49"/>
    </location>
</feature>
<feature type="site" description="Essential for protaglandin-E synthase activity" evidence="1">
    <location>
        <position position="126"/>
    </location>
</feature>
<reference key="1">
    <citation type="submission" date="2004-03" db="EMBL/GenBank/DDBJ databases">
        <title>Molecular cloning of microsomal prostaglandin E synthase-1 and cytosolic prostaglandin E synthase in macaque and distribution in female reproductive tissues.</title>
        <authorList>
            <person name="Parent J."/>
            <person name="Chapdelaine P."/>
            <person name="Fortier M.A."/>
        </authorList>
    </citation>
    <scope>NUCLEOTIDE SEQUENCE [MRNA]</scope>
</reference>
<comment type="function">
    <text evidence="1 2">Terminal enzyme of the cyclooxygenase (COX)-2-mediated prostaglandin E2 (PGE2) biosynthetic pathway. Catalyzes the glutathione-dependent oxidoreduction of prostaglandin endoperoxide H2 (PGH2) to prostaglandin E2 (PGE2) in response to inflammatory stimuli (By similarity). Plays a key role in inflammation response, fever and pain (By similarity). Also catalyzes the oxidoreduction of endocannabinoids into prostaglandin glycerol esters and PGG2 into 15-hydroperoxy-PGE2. In addition, displays low glutathione transferase and glutathione-dependent peroxidase activities, toward 1-chloro-2,4-dinitrobenzene and 5-hydroperoxyicosatetraenoic acid (5-HPETE), respectively (By similarity).</text>
</comment>
<comment type="catalytic activity">
    <reaction evidence="1">
        <text>prostaglandin H2 = prostaglandin E2</text>
        <dbReference type="Rhea" id="RHEA:12893"/>
        <dbReference type="ChEBI" id="CHEBI:57405"/>
        <dbReference type="ChEBI" id="CHEBI:606564"/>
        <dbReference type="EC" id="5.3.99.3"/>
    </reaction>
    <physiologicalReaction direction="left-to-right" evidence="1">
        <dbReference type="Rhea" id="RHEA:12894"/>
    </physiologicalReaction>
</comment>
<comment type="catalytic activity">
    <reaction evidence="1">
        <text>2-glyceryl-prostaglandin H2 = 2-glyceryl-prostaglandin E2</text>
        <dbReference type="Rhea" id="RHEA:53324"/>
        <dbReference type="ChEBI" id="CHEBI:85166"/>
        <dbReference type="ChEBI" id="CHEBI:137172"/>
    </reaction>
    <physiologicalReaction direction="left-to-right" evidence="1">
        <dbReference type="Rhea" id="RHEA:53325"/>
    </physiologicalReaction>
</comment>
<comment type="catalytic activity">
    <reaction evidence="1">
        <text>prostaglandin G2 = (15S)-15-hydroperoxy-prostaglandin E2</text>
        <dbReference type="Rhea" id="RHEA:64364"/>
        <dbReference type="ChEBI" id="CHEBI:82629"/>
        <dbReference type="ChEBI" id="CHEBI:152564"/>
    </reaction>
    <physiologicalReaction direction="left-to-right" evidence="1">
        <dbReference type="Rhea" id="RHEA:64365"/>
    </physiologicalReaction>
</comment>
<comment type="catalytic activity">
    <reaction evidence="1">
        <text>1-chloro-2,4-dinitrobenzene + glutathione = 2,4-dinitrophenyl-S-glutathione + chloride + H(+)</text>
        <dbReference type="Rhea" id="RHEA:51220"/>
        <dbReference type="ChEBI" id="CHEBI:15378"/>
        <dbReference type="ChEBI" id="CHEBI:17996"/>
        <dbReference type="ChEBI" id="CHEBI:34718"/>
        <dbReference type="ChEBI" id="CHEBI:57925"/>
        <dbReference type="ChEBI" id="CHEBI:133977"/>
        <dbReference type="EC" id="2.5.1.18"/>
    </reaction>
</comment>
<comment type="catalytic activity">
    <reaction evidence="1">
        <text>(5S)-hydroperoxy-(6E,8Z,11Z,14Z)-eicosatetraenoate + 2 glutathione = (5S)-hydroxy-(6E,8Z,11Z,14Z)-eicosatetraenoate + glutathione disulfide + H2O</text>
        <dbReference type="Rhea" id="RHEA:48620"/>
        <dbReference type="ChEBI" id="CHEBI:15377"/>
        <dbReference type="ChEBI" id="CHEBI:57450"/>
        <dbReference type="ChEBI" id="CHEBI:57925"/>
        <dbReference type="ChEBI" id="CHEBI:58297"/>
        <dbReference type="ChEBI" id="CHEBI:90632"/>
    </reaction>
</comment>
<comment type="cofactor">
    <cofactor evidence="1">
        <name>glutathione</name>
        <dbReference type="ChEBI" id="CHEBI:57925"/>
    </cofactor>
</comment>
<comment type="pathway">
    <text evidence="1">Lipid metabolism; prostaglandin biosynthesis.</text>
</comment>
<comment type="subunit">
    <text evidence="1">Homotrimer.</text>
</comment>
<comment type="subcellular location">
    <subcellularLocation>
        <location evidence="1">Membrane</location>
        <topology evidence="1">Multi-pass membrane protein</topology>
    </subcellularLocation>
    <subcellularLocation>
        <location evidence="1">Cytoplasm</location>
        <location evidence="1">Perinuclear region</location>
    </subcellularLocation>
    <text evidence="1">Colocalizes with PTGS1/COX-1 and PTGS2/COX-2 in the perinuclear compartment.</text>
</comment>
<comment type="similarity">
    <text evidence="3">Belongs to the MAPEG family.</text>
</comment>
<protein>
    <recommendedName>
        <fullName>Prostaglandin E synthase</fullName>
        <ecNumber evidence="1">5.3.99.3</ecNumber>
    </recommendedName>
    <alternativeName>
        <fullName>Glutathione peroxidase PTGES</fullName>
        <ecNumber evidence="1">1.11.1.-</ecNumber>
    </alternativeName>
    <alternativeName>
        <fullName>Glutathione transferase PTGES</fullName>
        <ecNumber evidence="1">2.5.1.18</ecNumber>
    </alternativeName>
    <alternativeName>
        <fullName>Microsomal glutathione S-transferase 1-like 1</fullName>
        <shortName>MGST1-L1</shortName>
    </alternativeName>
    <alternativeName>
        <fullName>Microsomal prostaglandin E synthase 1</fullName>
        <shortName>MPGES-1</shortName>
    </alternativeName>
</protein>
<accession>Q6PWL6</accession>
<keyword id="KW-0963">Cytoplasm</keyword>
<keyword id="KW-0275">Fatty acid biosynthesis</keyword>
<keyword id="KW-0276">Fatty acid metabolism</keyword>
<keyword id="KW-0413">Isomerase</keyword>
<keyword id="KW-0444">Lipid biosynthesis</keyword>
<keyword id="KW-0443">Lipid metabolism</keyword>
<keyword id="KW-0472">Membrane</keyword>
<keyword id="KW-0560">Oxidoreductase</keyword>
<keyword id="KW-0643">Prostaglandin biosynthesis</keyword>
<keyword id="KW-0644">Prostaglandin metabolism</keyword>
<keyword id="KW-1185">Reference proteome</keyword>
<keyword id="KW-0808">Transferase</keyword>
<keyword id="KW-0812">Transmembrane</keyword>
<keyword id="KW-1133">Transmembrane helix</keyword>
<gene>
    <name type="primary">PTGES</name>
    <name type="synonym">MGST1L1</name>
</gene>